<proteinExistence type="inferred from homology"/>
<dbReference type="EC" id="6.1.1.17" evidence="1"/>
<dbReference type="EMBL" id="AE016825">
    <property type="protein sequence ID" value="AAQ59611.1"/>
    <property type="molecule type" value="Genomic_DNA"/>
</dbReference>
<dbReference type="SMR" id="Q7NWP4"/>
<dbReference type="STRING" id="243365.CV_1937"/>
<dbReference type="KEGG" id="cvi:CV_1937"/>
<dbReference type="eggNOG" id="COG0008">
    <property type="taxonomic scope" value="Bacteria"/>
</dbReference>
<dbReference type="HOGENOM" id="CLU_015768_6_1_4"/>
<dbReference type="OrthoDB" id="9807503at2"/>
<dbReference type="Proteomes" id="UP000001424">
    <property type="component" value="Chromosome"/>
</dbReference>
<dbReference type="GO" id="GO:0005829">
    <property type="term" value="C:cytosol"/>
    <property type="evidence" value="ECO:0007669"/>
    <property type="project" value="TreeGrafter"/>
</dbReference>
<dbReference type="GO" id="GO:0005524">
    <property type="term" value="F:ATP binding"/>
    <property type="evidence" value="ECO:0007669"/>
    <property type="project" value="UniProtKB-UniRule"/>
</dbReference>
<dbReference type="GO" id="GO:0004818">
    <property type="term" value="F:glutamate-tRNA ligase activity"/>
    <property type="evidence" value="ECO:0007669"/>
    <property type="project" value="UniProtKB-UniRule"/>
</dbReference>
<dbReference type="GO" id="GO:0000049">
    <property type="term" value="F:tRNA binding"/>
    <property type="evidence" value="ECO:0007669"/>
    <property type="project" value="InterPro"/>
</dbReference>
<dbReference type="GO" id="GO:0008270">
    <property type="term" value="F:zinc ion binding"/>
    <property type="evidence" value="ECO:0007669"/>
    <property type="project" value="InterPro"/>
</dbReference>
<dbReference type="GO" id="GO:0006424">
    <property type="term" value="P:glutamyl-tRNA aminoacylation"/>
    <property type="evidence" value="ECO:0007669"/>
    <property type="project" value="UniProtKB-UniRule"/>
</dbReference>
<dbReference type="CDD" id="cd00808">
    <property type="entry name" value="GluRS_core"/>
    <property type="match status" value="1"/>
</dbReference>
<dbReference type="FunFam" id="3.40.50.620:FF:000007">
    <property type="entry name" value="Glutamate--tRNA ligase"/>
    <property type="match status" value="1"/>
</dbReference>
<dbReference type="Gene3D" id="1.10.10.350">
    <property type="match status" value="1"/>
</dbReference>
<dbReference type="Gene3D" id="3.40.50.620">
    <property type="entry name" value="HUPs"/>
    <property type="match status" value="1"/>
</dbReference>
<dbReference type="HAMAP" id="MF_00022">
    <property type="entry name" value="Glu_tRNA_synth_type1"/>
    <property type="match status" value="1"/>
</dbReference>
<dbReference type="InterPro" id="IPR045462">
    <property type="entry name" value="aa-tRNA-synth_I_cd-bd"/>
</dbReference>
<dbReference type="InterPro" id="IPR020751">
    <property type="entry name" value="aa-tRNA-synth_I_codon-bd_sub2"/>
</dbReference>
<dbReference type="InterPro" id="IPR001412">
    <property type="entry name" value="aa-tRNA-synth_I_CS"/>
</dbReference>
<dbReference type="InterPro" id="IPR008925">
    <property type="entry name" value="aa_tRNA-synth_I_cd-bd_sf"/>
</dbReference>
<dbReference type="InterPro" id="IPR004527">
    <property type="entry name" value="Glu-tRNA-ligase_bac/mito"/>
</dbReference>
<dbReference type="InterPro" id="IPR000924">
    <property type="entry name" value="Glu/Gln-tRNA-synth"/>
</dbReference>
<dbReference type="InterPro" id="IPR020058">
    <property type="entry name" value="Glu/Gln-tRNA-synth_Ib_cat-dom"/>
</dbReference>
<dbReference type="InterPro" id="IPR049940">
    <property type="entry name" value="GluQ/Sye"/>
</dbReference>
<dbReference type="InterPro" id="IPR033910">
    <property type="entry name" value="GluRS_core"/>
</dbReference>
<dbReference type="InterPro" id="IPR014729">
    <property type="entry name" value="Rossmann-like_a/b/a_fold"/>
</dbReference>
<dbReference type="NCBIfam" id="TIGR00464">
    <property type="entry name" value="gltX_bact"/>
    <property type="match status" value="1"/>
</dbReference>
<dbReference type="PANTHER" id="PTHR43311">
    <property type="entry name" value="GLUTAMATE--TRNA LIGASE"/>
    <property type="match status" value="1"/>
</dbReference>
<dbReference type="PANTHER" id="PTHR43311:SF2">
    <property type="entry name" value="GLUTAMATE--TRNA LIGASE, MITOCHONDRIAL-RELATED"/>
    <property type="match status" value="1"/>
</dbReference>
<dbReference type="Pfam" id="PF19269">
    <property type="entry name" value="Anticodon_2"/>
    <property type="match status" value="1"/>
</dbReference>
<dbReference type="Pfam" id="PF00749">
    <property type="entry name" value="tRNA-synt_1c"/>
    <property type="match status" value="1"/>
</dbReference>
<dbReference type="PRINTS" id="PR00987">
    <property type="entry name" value="TRNASYNTHGLU"/>
</dbReference>
<dbReference type="SUPFAM" id="SSF48163">
    <property type="entry name" value="An anticodon-binding domain of class I aminoacyl-tRNA synthetases"/>
    <property type="match status" value="1"/>
</dbReference>
<dbReference type="SUPFAM" id="SSF52374">
    <property type="entry name" value="Nucleotidylyl transferase"/>
    <property type="match status" value="1"/>
</dbReference>
<dbReference type="PROSITE" id="PS00178">
    <property type="entry name" value="AA_TRNA_LIGASE_I"/>
    <property type="match status" value="1"/>
</dbReference>
<sequence>MIRTRFAPSPTGYLHIGGVRTALFSWAYARKNNGVFVLRIEDTDLERSTPESVKAILDGMHWVGLDYDEGPFYQTHRFDRYKEVIQQLLDSGHAYHCYCSKEELEAMRAEQEARGDKPRYDRRWRPEAGKTLPAIPEGVQPVVRFKTPLSGVVAWDDAVKGRIEISNEELDDLIIARPDGSPTYNFCVVVDDWDMRITHVIRGDDHVNNTPRQINILKALNAPLPVYGHLPMILNEDGQKMSKRRDAVSVVDYADKGILPEALLNYLARLGWGHGDDEFFSMEQFVEWFSLEAVSPSASRFNHEKFMWLNAQHIKAADNARLAELIAPRLAAAHVDTAHGPAIGDVLALVKERVQDLNALALEVDYFYKKREPAAADVEKHLAGDAVERMGRFADRLAALEAWTAESIHELFKPFCADEGIKMGQLGMPLRVLVCGTTQTPSVDAVLALIGKEEVLRRIRG</sequence>
<feature type="chain" id="PRO_0000119543" description="Glutamate--tRNA ligase">
    <location>
        <begin position="1"/>
        <end position="461"/>
    </location>
</feature>
<feature type="short sequence motif" description="'HIGH' region" evidence="1">
    <location>
        <begin position="8"/>
        <end position="18"/>
    </location>
</feature>
<feature type="short sequence motif" description="'KMSKS' region" evidence="1">
    <location>
        <begin position="240"/>
        <end position="244"/>
    </location>
</feature>
<feature type="binding site" evidence="1">
    <location>
        <position position="243"/>
    </location>
    <ligand>
        <name>ATP</name>
        <dbReference type="ChEBI" id="CHEBI:30616"/>
    </ligand>
</feature>
<gene>
    <name evidence="1" type="primary">gltX</name>
    <name type="ordered locus">CV_1937</name>
</gene>
<reference key="1">
    <citation type="journal article" date="2003" name="Proc. Natl. Acad. Sci. U.S.A.">
        <title>The complete genome sequence of Chromobacterium violaceum reveals remarkable and exploitable bacterial adaptability.</title>
        <authorList>
            <person name="Vasconcelos A.T.R."/>
            <person name="de Almeida D.F."/>
            <person name="Hungria M."/>
            <person name="Guimaraes C.T."/>
            <person name="Antonio R.V."/>
            <person name="Almeida F.C."/>
            <person name="de Almeida L.G.P."/>
            <person name="de Almeida R."/>
            <person name="Alves-Gomes J.A."/>
            <person name="Andrade E.M."/>
            <person name="Araripe J."/>
            <person name="de Araujo M.F.F."/>
            <person name="Astolfi-Filho S."/>
            <person name="Azevedo V."/>
            <person name="Baptista A.J."/>
            <person name="Bataus L.A.M."/>
            <person name="Batista J.S."/>
            <person name="Belo A."/>
            <person name="van den Berg C."/>
            <person name="Bogo M."/>
            <person name="Bonatto S."/>
            <person name="Bordignon J."/>
            <person name="Brigido M.M."/>
            <person name="Brito C.A."/>
            <person name="Brocchi M."/>
            <person name="Burity H.A."/>
            <person name="Camargo A.A."/>
            <person name="Cardoso D.D.P."/>
            <person name="Carneiro N.P."/>
            <person name="Carraro D.M."/>
            <person name="Carvalho C.M.B."/>
            <person name="Cascardo J.C.M."/>
            <person name="Cavada B.S."/>
            <person name="Chueire L.M.O."/>
            <person name="Creczynski-Pasa T.B."/>
            <person name="Cunha-Junior N.C."/>
            <person name="Fagundes N."/>
            <person name="Falcao C.L."/>
            <person name="Fantinatti F."/>
            <person name="Farias I.P."/>
            <person name="Felipe M.S.S."/>
            <person name="Ferrari L.P."/>
            <person name="Ferro J.A."/>
            <person name="Ferro M.I.T."/>
            <person name="Franco G.R."/>
            <person name="Freitas N.S.A."/>
            <person name="Furlan L.R."/>
            <person name="Gazzinelli R.T."/>
            <person name="Gomes E.A."/>
            <person name="Goncalves P.R."/>
            <person name="Grangeiro T.B."/>
            <person name="Grattapaglia D."/>
            <person name="Grisard E.C."/>
            <person name="Hanna E.S."/>
            <person name="Jardim S.N."/>
            <person name="Laurino J."/>
            <person name="Leoi L.C.T."/>
            <person name="Lima L.F.A."/>
            <person name="Loureiro M.F."/>
            <person name="Lyra M.C.C.P."/>
            <person name="Madeira H.M.F."/>
            <person name="Manfio G.P."/>
            <person name="Maranhao A.Q."/>
            <person name="Martins W.S."/>
            <person name="di Mauro S.M.Z."/>
            <person name="de Medeiros S.R.B."/>
            <person name="Meissner R.V."/>
            <person name="Moreira M.A.M."/>
            <person name="Nascimento F.F."/>
            <person name="Nicolas M.F."/>
            <person name="Oliveira J.G."/>
            <person name="Oliveira S.C."/>
            <person name="Paixao R.F.C."/>
            <person name="Parente J.A."/>
            <person name="Pedrosa F.O."/>
            <person name="Pena S.D.J."/>
            <person name="Pereira J.O."/>
            <person name="Pereira M."/>
            <person name="Pinto L.S.R.C."/>
            <person name="Pinto L.S."/>
            <person name="Porto J.I.R."/>
            <person name="Potrich D.P."/>
            <person name="Ramalho-Neto C.E."/>
            <person name="Reis A.M.M."/>
            <person name="Rigo L.U."/>
            <person name="Rondinelli E."/>
            <person name="Santos E.B.P."/>
            <person name="Santos F.R."/>
            <person name="Schneider M.P.C."/>
            <person name="Seuanez H.N."/>
            <person name="Silva A.M.R."/>
            <person name="da Silva A.L.C."/>
            <person name="Silva D.W."/>
            <person name="Silva R."/>
            <person name="Simoes I.C."/>
            <person name="Simon D."/>
            <person name="Soares C.M.A."/>
            <person name="Soares R.B.A."/>
            <person name="Souza E.M."/>
            <person name="Souza K.R.L."/>
            <person name="Souza R.C."/>
            <person name="Steffens M.B.R."/>
            <person name="Steindel M."/>
            <person name="Teixeira S.R."/>
            <person name="Urmenyi T."/>
            <person name="Vettore A."/>
            <person name="Wassem R."/>
            <person name="Zaha A."/>
            <person name="Simpson A.J.G."/>
        </authorList>
    </citation>
    <scope>NUCLEOTIDE SEQUENCE [LARGE SCALE GENOMIC DNA]</scope>
    <source>
        <strain>ATCC 12472 / DSM 30191 / JCM 1249 / CCUG 213 / NBRC 12614 / NCIMB 9131 / NCTC 9757 / MK</strain>
    </source>
</reference>
<protein>
    <recommendedName>
        <fullName evidence="1">Glutamate--tRNA ligase</fullName>
        <ecNumber evidence="1">6.1.1.17</ecNumber>
    </recommendedName>
    <alternativeName>
        <fullName evidence="1">Glutamyl-tRNA synthetase</fullName>
        <shortName evidence="1">GluRS</shortName>
    </alternativeName>
</protein>
<accession>Q7NWP4</accession>
<name>SYE_CHRVO</name>
<organism>
    <name type="scientific">Chromobacterium violaceum (strain ATCC 12472 / DSM 30191 / JCM 1249 / CCUG 213 / NBRC 12614 / NCIMB 9131 / NCTC 9757 / MK)</name>
    <dbReference type="NCBI Taxonomy" id="243365"/>
    <lineage>
        <taxon>Bacteria</taxon>
        <taxon>Pseudomonadati</taxon>
        <taxon>Pseudomonadota</taxon>
        <taxon>Betaproteobacteria</taxon>
        <taxon>Neisseriales</taxon>
        <taxon>Chromobacteriaceae</taxon>
        <taxon>Chromobacterium</taxon>
    </lineage>
</organism>
<evidence type="ECO:0000255" key="1">
    <source>
        <dbReference type="HAMAP-Rule" id="MF_00022"/>
    </source>
</evidence>
<keyword id="KW-0030">Aminoacyl-tRNA synthetase</keyword>
<keyword id="KW-0067">ATP-binding</keyword>
<keyword id="KW-0963">Cytoplasm</keyword>
<keyword id="KW-0436">Ligase</keyword>
<keyword id="KW-0547">Nucleotide-binding</keyword>
<keyword id="KW-0648">Protein biosynthesis</keyword>
<keyword id="KW-1185">Reference proteome</keyword>
<comment type="function">
    <text evidence="1">Catalyzes the attachment of glutamate to tRNA(Glu) in a two-step reaction: glutamate is first activated by ATP to form Glu-AMP and then transferred to the acceptor end of tRNA(Glu).</text>
</comment>
<comment type="catalytic activity">
    <reaction evidence="1">
        <text>tRNA(Glu) + L-glutamate + ATP = L-glutamyl-tRNA(Glu) + AMP + diphosphate</text>
        <dbReference type="Rhea" id="RHEA:23540"/>
        <dbReference type="Rhea" id="RHEA-COMP:9663"/>
        <dbReference type="Rhea" id="RHEA-COMP:9680"/>
        <dbReference type="ChEBI" id="CHEBI:29985"/>
        <dbReference type="ChEBI" id="CHEBI:30616"/>
        <dbReference type="ChEBI" id="CHEBI:33019"/>
        <dbReference type="ChEBI" id="CHEBI:78442"/>
        <dbReference type="ChEBI" id="CHEBI:78520"/>
        <dbReference type="ChEBI" id="CHEBI:456215"/>
        <dbReference type="EC" id="6.1.1.17"/>
    </reaction>
</comment>
<comment type="subunit">
    <text evidence="1">Monomer.</text>
</comment>
<comment type="subcellular location">
    <subcellularLocation>
        <location evidence="1">Cytoplasm</location>
    </subcellularLocation>
</comment>
<comment type="similarity">
    <text evidence="1">Belongs to the class-I aminoacyl-tRNA synthetase family. Glutamate--tRNA ligase type 1 subfamily.</text>
</comment>